<evidence type="ECO:0000250" key="1">
    <source>
        <dbReference type="UniProtKB" id="Q94IP1"/>
    </source>
</evidence>
<evidence type="ECO:0000255" key="2"/>
<evidence type="ECO:0000269" key="3">
    <source>
    </source>
</evidence>
<evidence type="ECO:0000303" key="4">
    <source>
    </source>
</evidence>
<evidence type="ECO:0000305" key="5"/>
<organism>
    <name type="scientific">Solanum lycopersicum</name>
    <name type="common">Tomato</name>
    <name type="synonym">Lycopersicon esculentum</name>
    <dbReference type="NCBI Taxonomy" id="4081"/>
    <lineage>
        <taxon>Eukaryota</taxon>
        <taxon>Viridiplantae</taxon>
        <taxon>Streptophyta</taxon>
        <taxon>Embryophyta</taxon>
        <taxon>Tracheophyta</taxon>
        <taxon>Spermatophyta</taxon>
        <taxon>Magnoliopsida</taxon>
        <taxon>eudicotyledons</taxon>
        <taxon>Gunneridae</taxon>
        <taxon>Pentapetalae</taxon>
        <taxon>asterids</taxon>
        <taxon>lamiids</taxon>
        <taxon>Solanales</taxon>
        <taxon>Solanaceae</taxon>
        <taxon>Solanoideae</taxon>
        <taxon>Solaneae</taxon>
        <taxon>Solanum</taxon>
        <taxon>Solanum subgen. Lycopersicon</taxon>
    </lineage>
</organism>
<gene>
    <name evidence="4" type="primary">CYP716E26</name>
</gene>
<accession>A0A3Q7HS74</accession>
<protein>
    <recommendedName>
        <fullName evidence="5">Beta-amyrin 6-beta-monooxygenase</fullName>
        <ecNumber evidence="3">1.14.14.64</ecNumber>
    </recommendedName>
    <alternativeName>
        <fullName evidence="5">Cytochrome P450 716E26</fullName>
    </alternativeName>
</protein>
<keyword id="KW-0349">Heme</keyword>
<keyword id="KW-0408">Iron</keyword>
<keyword id="KW-0472">Membrane</keyword>
<keyword id="KW-0479">Metal-binding</keyword>
<keyword id="KW-0503">Monooxygenase</keyword>
<keyword id="KW-0560">Oxidoreductase</keyword>
<keyword id="KW-1185">Reference proteome</keyword>
<keyword id="KW-0812">Transmembrane</keyword>
<keyword id="KW-1133">Transmembrane helix</keyword>
<reference key="1">
    <citation type="journal article" date="2012" name="Nature">
        <title>The tomato genome sequence provides insights into fleshy fruit evolution.</title>
        <authorList>
            <consortium name="Tomato Genome Consortium"/>
        </authorList>
    </citation>
    <scope>NUCLEOTIDE SEQUENCE [LARGE SCALE GENOMIC DNA]</scope>
    <source>
        <strain>cv. Heinz 1706</strain>
    </source>
</reference>
<reference key="2">
    <citation type="journal article" date="2017" name="Front. Plant Sci.">
        <title>Functional characterization of CYP716 family P450 enzymes in triterpenoid biosynthesis in tomato.</title>
        <authorList>
            <person name="Yasumoto S."/>
            <person name="Seki H."/>
            <person name="Shimizu Y."/>
            <person name="Fukushima E.O."/>
            <person name="Muranaka T."/>
        </authorList>
    </citation>
    <scope>FUNCTION</scope>
    <scope>CATALYTIC ACTIVITY</scope>
    <scope>TISSUE SPECIFICITY</scope>
</reference>
<proteinExistence type="evidence at protein level"/>
<comment type="function">
    <text evidence="3">Catalyzes the C-6 beta-hydroxylation of beta-amyrin to form daturadiol (PubMed:28194155). Catalyzes the C-6 beta-hydroxylation of alpha-amyrin to form 6-beta-hydroxy-alpha-amyrin (PubMed:28194155).</text>
</comment>
<comment type="catalytic activity">
    <reaction evidence="3">
        <text>beta-amyrin + reduced [NADPH--hemoprotein reductase] + O2 = daturadiol + oxidized [NADPH--hemoprotein reductase] + H2O + H(+)</text>
        <dbReference type="Rhea" id="RHEA:55452"/>
        <dbReference type="Rhea" id="RHEA-COMP:11964"/>
        <dbReference type="Rhea" id="RHEA-COMP:11965"/>
        <dbReference type="ChEBI" id="CHEBI:10352"/>
        <dbReference type="ChEBI" id="CHEBI:15377"/>
        <dbReference type="ChEBI" id="CHEBI:15378"/>
        <dbReference type="ChEBI" id="CHEBI:15379"/>
        <dbReference type="ChEBI" id="CHEBI:57618"/>
        <dbReference type="ChEBI" id="CHEBI:58210"/>
        <dbReference type="ChEBI" id="CHEBI:138955"/>
        <dbReference type="EC" id="1.14.14.64"/>
    </reaction>
    <physiologicalReaction direction="left-to-right" evidence="3">
        <dbReference type="Rhea" id="RHEA:55453"/>
    </physiologicalReaction>
</comment>
<comment type="cofactor">
    <cofactor evidence="1">
        <name>heme</name>
        <dbReference type="ChEBI" id="CHEBI:30413"/>
    </cofactor>
</comment>
<comment type="subcellular location">
    <subcellularLocation>
        <location evidence="2">Membrane</location>
        <topology evidence="2">Single-pass membrane protein</topology>
    </subcellularLocation>
</comment>
<comment type="tissue specificity">
    <text evidence="3">Specifically expressed in roots.</text>
</comment>
<comment type="similarity">
    <text evidence="5">Belongs to the cytochrome P450 family.</text>
</comment>
<dbReference type="EC" id="1.14.14.64" evidence="3"/>
<dbReference type="SMR" id="A0A3Q7HS74"/>
<dbReference type="STRING" id="4081.A0A3Q7HS74"/>
<dbReference type="PaxDb" id="4081-Solyc06g065430.2.1"/>
<dbReference type="EnsemblPlants" id="Solyc06g065430.3.1">
    <property type="protein sequence ID" value="Solyc06g065430.3.1"/>
    <property type="gene ID" value="Solyc06g065430.3"/>
</dbReference>
<dbReference type="GeneID" id="101250025"/>
<dbReference type="Gramene" id="Solyc06g065430.3.1">
    <property type="protein sequence ID" value="Solyc06g065430.3.1"/>
    <property type="gene ID" value="Solyc06g065430.3"/>
</dbReference>
<dbReference type="KEGG" id="sly:101250025"/>
<dbReference type="InParanoid" id="A0A3Q7HS74"/>
<dbReference type="OMA" id="KLLTTWW"/>
<dbReference type="OrthoDB" id="3945418at2759"/>
<dbReference type="BRENDA" id="1.14.14.64">
    <property type="organism ID" value="3101"/>
</dbReference>
<dbReference type="Proteomes" id="UP000004994">
    <property type="component" value="Chromosome 6"/>
</dbReference>
<dbReference type="GO" id="GO:0016020">
    <property type="term" value="C:membrane"/>
    <property type="evidence" value="ECO:0007669"/>
    <property type="project" value="UniProtKB-SubCell"/>
</dbReference>
<dbReference type="GO" id="GO:0020037">
    <property type="term" value="F:heme binding"/>
    <property type="evidence" value="ECO:0007669"/>
    <property type="project" value="InterPro"/>
</dbReference>
<dbReference type="GO" id="GO:0005506">
    <property type="term" value="F:iron ion binding"/>
    <property type="evidence" value="ECO:0007669"/>
    <property type="project" value="InterPro"/>
</dbReference>
<dbReference type="GO" id="GO:0004497">
    <property type="term" value="F:monooxygenase activity"/>
    <property type="evidence" value="ECO:0000318"/>
    <property type="project" value="GO_Central"/>
</dbReference>
<dbReference type="GO" id="GO:0016712">
    <property type="term" value="F:oxidoreductase activity, acting on paired donors, with incorporation or reduction of molecular oxygen, reduced flavin or flavoprotein as one donor, and incorporation of one atom of oxygen"/>
    <property type="evidence" value="ECO:0000314"/>
    <property type="project" value="UniProtKB"/>
</dbReference>
<dbReference type="GO" id="GO:0019742">
    <property type="term" value="P:pentacyclic triterpenoid metabolic process"/>
    <property type="evidence" value="ECO:0000314"/>
    <property type="project" value="UniProtKB"/>
</dbReference>
<dbReference type="CDD" id="cd11043">
    <property type="entry name" value="CYP90-like"/>
    <property type="match status" value="1"/>
</dbReference>
<dbReference type="FunFam" id="1.10.630.10:FF:000022">
    <property type="entry name" value="Taxadiene 5-alpha hydroxylase"/>
    <property type="match status" value="1"/>
</dbReference>
<dbReference type="Gene3D" id="1.10.630.10">
    <property type="entry name" value="Cytochrome P450"/>
    <property type="match status" value="1"/>
</dbReference>
<dbReference type="InterPro" id="IPR001128">
    <property type="entry name" value="Cyt_P450"/>
</dbReference>
<dbReference type="InterPro" id="IPR017972">
    <property type="entry name" value="Cyt_P450_CS"/>
</dbReference>
<dbReference type="InterPro" id="IPR002401">
    <property type="entry name" value="Cyt_P450_E_grp-I"/>
</dbReference>
<dbReference type="InterPro" id="IPR036396">
    <property type="entry name" value="Cyt_P450_sf"/>
</dbReference>
<dbReference type="PANTHER" id="PTHR24286:SF298">
    <property type="entry name" value="BETA-AMYRIN 6-BETA-MONOOXYGENASE"/>
    <property type="match status" value="1"/>
</dbReference>
<dbReference type="PANTHER" id="PTHR24286">
    <property type="entry name" value="CYTOCHROME P450 26"/>
    <property type="match status" value="1"/>
</dbReference>
<dbReference type="Pfam" id="PF00067">
    <property type="entry name" value="p450"/>
    <property type="match status" value="1"/>
</dbReference>
<dbReference type="PRINTS" id="PR00463">
    <property type="entry name" value="EP450I"/>
</dbReference>
<dbReference type="PRINTS" id="PR00385">
    <property type="entry name" value="P450"/>
</dbReference>
<dbReference type="SUPFAM" id="SSF48264">
    <property type="entry name" value="Cytochrome P450"/>
    <property type="match status" value="1"/>
</dbReference>
<dbReference type="PROSITE" id="PS00086">
    <property type="entry name" value="CYTOCHROME_P450"/>
    <property type="match status" value="1"/>
</dbReference>
<sequence>MDPFILYSLAFALVYISLYFIFKGNYSNNKHTNLPLGSNGWPILGENIDMAYSSSPEKFIHERMEKHSSQVFKTSLLGQKIAIFCGTSGNKFLFSNENKLLTTWWPPSLTKPLMCPTQSQSQNSVKEIALLNRGFLREILKPENLKQYIPFMDSMARDHLKQEWIPFKEVKIYPLVKKYTFSLACKLFLSIDDFRHVKKLSDPFVLVTSGMFTVPINLPGTPYNRAIKGGKMVHEELMKIIKERKINEKNNHSNDLLSQLISFSDENGQFMNDAEIYNNIIGLLVASYDTTSAAITFVLKYLAELPNIFNEVYKEQMEIAKSKGEGELLNWDDIQKMKYSWNVACEAIRLMPPAQGAFREAITDFTFGGFTVPKGWKTFWSVYSTHKNPKYFPEPEKFDPCRFEGSGPEPYTFVPFGGGPRMCPGKEYARLEILVFMYNIVTNFKLEKLVPHEKIIYKSSPVPLNGLPVRIQPIA</sequence>
<name>C71E6_SOLLC</name>
<feature type="chain" id="PRO_0000451599" description="Beta-amyrin 6-beta-monooxygenase">
    <location>
        <begin position="1"/>
        <end position="475"/>
    </location>
</feature>
<feature type="transmembrane region" description="Helical" evidence="2">
    <location>
        <begin position="6"/>
        <end position="22"/>
    </location>
</feature>
<feature type="binding site" description="axial binding residue" evidence="1">
    <location>
        <position position="423"/>
    </location>
    <ligand>
        <name>heme</name>
        <dbReference type="ChEBI" id="CHEBI:30413"/>
    </ligand>
    <ligandPart>
        <name>Fe</name>
        <dbReference type="ChEBI" id="CHEBI:18248"/>
    </ligandPart>
</feature>